<accession>Q03F34</accession>
<gene>
    <name evidence="1" type="primary">obg</name>
    <name type="ordered locus">PEPE_1134</name>
</gene>
<proteinExistence type="inferred from homology"/>
<dbReference type="EC" id="3.6.5.-" evidence="1"/>
<dbReference type="EMBL" id="CP000422">
    <property type="protein sequence ID" value="ABJ68188.1"/>
    <property type="molecule type" value="Genomic_DNA"/>
</dbReference>
<dbReference type="SMR" id="Q03F34"/>
<dbReference type="STRING" id="278197.PEPE_1134"/>
<dbReference type="GeneID" id="33062478"/>
<dbReference type="KEGG" id="ppe:PEPE_1134"/>
<dbReference type="eggNOG" id="COG0536">
    <property type="taxonomic scope" value="Bacteria"/>
</dbReference>
<dbReference type="HOGENOM" id="CLU_011747_2_1_9"/>
<dbReference type="OrthoDB" id="9807318at2"/>
<dbReference type="Proteomes" id="UP000000773">
    <property type="component" value="Chromosome"/>
</dbReference>
<dbReference type="GO" id="GO:0005737">
    <property type="term" value="C:cytoplasm"/>
    <property type="evidence" value="ECO:0007669"/>
    <property type="project" value="UniProtKB-SubCell"/>
</dbReference>
<dbReference type="GO" id="GO:0005525">
    <property type="term" value="F:GTP binding"/>
    <property type="evidence" value="ECO:0007669"/>
    <property type="project" value="UniProtKB-UniRule"/>
</dbReference>
<dbReference type="GO" id="GO:0003924">
    <property type="term" value="F:GTPase activity"/>
    <property type="evidence" value="ECO:0007669"/>
    <property type="project" value="UniProtKB-UniRule"/>
</dbReference>
<dbReference type="GO" id="GO:0000287">
    <property type="term" value="F:magnesium ion binding"/>
    <property type="evidence" value="ECO:0007669"/>
    <property type="project" value="InterPro"/>
</dbReference>
<dbReference type="GO" id="GO:0042254">
    <property type="term" value="P:ribosome biogenesis"/>
    <property type="evidence" value="ECO:0007669"/>
    <property type="project" value="UniProtKB-UniRule"/>
</dbReference>
<dbReference type="CDD" id="cd01898">
    <property type="entry name" value="Obg"/>
    <property type="match status" value="1"/>
</dbReference>
<dbReference type="FunFam" id="2.70.210.12:FF:000001">
    <property type="entry name" value="GTPase Obg"/>
    <property type="match status" value="1"/>
</dbReference>
<dbReference type="Gene3D" id="3.30.300.350">
    <property type="entry name" value="GTP-binding protein OBG, C-terminal domain"/>
    <property type="match status" value="1"/>
</dbReference>
<dbReference type="Gene3D" id="2.70.210.12">
    <property type="entry name" value="GTP1/OBG domain"/>
    <property type="match status" value="1"/>
</dbReference>
<dbReference type="Gene3D" id="3.40.50.300">
    <property type="entry name" value="P-loop containing nucleotide triphosphate hydrolases"/>
    <property type="match status" value="1"/>
</dbReference>
<dbReference type="HAMAP" id="MF_01454">
    <property type="entry name" value="GTPase_Obg"/>
    <property type="match status" value="1"/>
</dbReference>
<dbReference type="InterPro" id="IPR031167">
    <property type="entry name" value="G_OBG"/>
</dbReference>
<dbReference type="InterPro" id="IPR006073">
    <property type="entry name" value="GTP-bd"/>
</dbReference>
<dbReference type="InterPro" id="IPR014100">
    <property type="entry name" value="GTP-bd_Obg/CgtA"/>
</dbReference>
<dbReference type="InterPro" id="IPR036346">
    <property type="entry name" value="GTP-bd_prot_GTP1/OBG_C_sf"/>
</dbReference>
<dbReference type="InterPro" id="IPR006074">
    <property type="entry name" value="GTP1-OBG_CS"/>
</dbReference>
<dbReference type="InterPro" id="IPR006169">
    <property type="entry name" value="GTP1_OBG_dom"/>
</dbReference>
<dbReference type="InterPro" id="IPR036726">
    <property type="entry name" value="GTP1_OBG_dom_sf"/>
</dbReference>
<dbReference type="InterPro" id="IPR045086">
    <property type="entry name" value="OBG_GTPase"/>
</dbReference>
<dbReference type="InterPro" id="IPR015349">
    <property type="entry name" value="OCT_dom"/>
</dbReference>
<dbReference type="InterPro" id="IPR027417">
    <property type="entry name" value="P-loop_NTPase"/>
</dbReference>
<dbReference type="NCBIfam" id="TIGR02729">
    <property type="entry name" value="Obg_CgtA"/>
    <property type="match status" value="1"/>
</dbReference>
<dbReference type="NCBIfam" id="TIGR03595">
    <property type="entry name" value="Obg_CgtA_exten"/>
    <property type="match status" value="1"/>
</dbReference>
<dbReference type="NCBIfam" id="NF008954">
    <property type="entry name" value="PRK12296.1"/>
    <property type="match status" value="1"/>
</dbReference>
<dbReference type="NCBIfam" id="NF008955">
    <property type="entry name" value="PRK12297.1"/>
    <property type="match status" value="1"/>
</dbReference>
<dbReference type="NCBIfam" id="NF008956">
    <property type="entry name" value="PRK12299.1"/>
    <property type="match status" value="1"/>
</dbReference>
<dbReference type="PANTHER" id="PTHR11702">
    <property type="entry name" value="DEVELOPMENTALLY REGULATED GTP-BINDING PROTEIN-RELATED"/>
    <property type="match status" value="1"/>
</dbReference>
<dbReference type="PANTHER" id="PTHR11702:SF31">
    <property type="entry name" value="MITOCHONDRIAL RIBOSOME-ASSOCIATED GTPASE 2"/>
    <property type="match status" value="1"/>
</dbReference>
<dbReference type="Pfam" id="PF09269">
    <property type="entry name" value="DUF1967"/>
    <property type="match status" value="1"/>
</dbReference>
<dbReference type="Pfam" id="PF01018">
    <property type="entry name" value="GTP1_OBG"/>
    <property type="match status" value="1"/>
</dbReference>
<dbReference type="Pfam" id="PF01926">
    <property type="entry name" value="MMR_HSR1"/>
    <property type="match status" value="1"/>
</dbReference>
<dbReference type="PIRSF" id="PIRSF002401">
    <property type="entry name" value="GTP_bd_Obg/CgtA"/>
    <property type="match status" value="1"/>
</dbReference>
<dbReference type="PRINTS" id="PR00326">
    <property type="entry name" value="GTP1OBG"/>
</dbReference>
<dbReference type="SUPFAM" id="SSF102741">
    <property type="entry name" value="Obg GTP-binding protein C-terminal domain"/>
    <property type="match status" value="1"/>
</dbReference>
<dbReference type="SUPFAM" id="SSF82051">
    <property type="entry name" value="Obg GTP-binding protein N-terminal domain"/>
    <property type="match status" value="1"/>
</dbReference>
<dbReference type="SUPFAM" id="SSF52540">
    <property type="entry name" value="P-loop containing nucleoside triphosphate hydrolases"/>
    <property type="match status" value="1"/>
</dbReference>
<dbReference type="PROSITE" id="PS51710">
    <property type="entry name" value="G_OBG"/>
    <property type="match status" value="1"/>
</dbReference>
<dbReference type="PROSITE" id="PS00905">
    <property type="entry name" value="GTP1_OBG"/>
    <property type="match status" value="1"/>
</dbReference>
<dbReference type="PROSITE" id="PS51883">
    <property type="entry name" value="OBG"/>
    <property type="match status" value="1"/>
</dbReference>
<dbReference type="PROSITE" id="PS51881">
    <property type="entry name" value="OCT"/>
    <property type="match status" value="1"/>
</dbReference>
<comment type="function">
    <text evidence="1">An essential GTPase which binds GTP, GDP and possibly (p)ppGpp with moderate affinity, with high nucleotide exchange rates and a fairly low GTP hydrolysis rate. Plays a role in control of the cell cycle, stress response, ribosome biogenesis and in those bacteria that undergo differentiation, in morphogenesis control.</text>
</comment>
<comment type="cofactor">
    <cofactor evidence="1">
        <name>Mg(2+)</name>
        <dbReference type="ChEBI" id="CHEBI:18420"/>
    </cofactor>
</comment>
<comment type="subunit">
    <text evidence="1">Monomer.</text>
</comment>
<comment type="subcellular location">
    <subcellularLocation>
        <location evidence="1">Cytoplasm</location>
    </subcellularLocation>
</comment>
<comment type="similarity">
    <text evidence="1">Belongs to the TRAFAC class OBG-HflX-like GTPase superfamily. OBG GTPase family.</text>
</comment>
<sequence length="430" mass="47730">MFVDQVKINVKAGNGGNGIVAFRREKYVPNGGPAGGDGGRGGNVVLKVDPGLRTLMDFRYRHKFKADSGKNGMNKQMTGRSSQDLVISVPGGTIVRDLTTGRVIGDLTDNGQELVVAKGGRGGRGNMRFASPRNPAPEISENGEPGEEIELQLELKVLADVGLLGFPSVGKSTLLSVVTSAKPKIAEYHFTTLVPNLGMVQLDDGRDFVIADIPGLIEGASQGVGLGFEFLRHVERTRVLLHLVDMSGMTEEDPFTNFRQINEELKKYNPELLERRQIIVPTKMDLPGSDEELKKFEKQVRADERYADFEIFPISSITHNGLEKLVARTADVLEEIPQHSLIATSDEETEKTYEFSSEKDFTIENIDDVWVIEGEKIEKLFKMTDTTHDESLLRFARQMRGMGIDDELRRLGARNGDSVQILDFVFEFVE</sequence>
<organism>
    <name type="scientific">Pediococcus pentosaceus (strain ATCC 25745 / CCUG 21536 / LMG 10740 / 183-1w)</name>
    <dbReference type="NCBI Taxonomy" id="278197"/>
    <lineage>
        <taxon>Bacteria</taxon>
        <taxon>Bacillati</taxon>
        <taxon>Bacillota</taxon>
        <taxon>Bacilli</taxon>
        <taxon>Lactobacillales</taxon>
        <taxon>Lactobacillaceae</taxon>
        <taxon>Pediococcus</taxon>
    </lineage>
</organism>
<protein>
    <recommendedName>
        <fullName evidence="1">GTPase Obg</fullName>
        <ecNumber evidence="1">3.6.5.-</ecNumber>
    </recommendedName>
    <alternativeName>
        <fullName evidence="1">GTP-binding protein Obg</fullName>
    </alternativeName>
</protein>
<name>OBG_PEDPA</name>
<keyword id="KW-0963">Cytoplasm</keyword>
<keyword id="KW-0342">GTP-binding</keyword>
<keyword id="KW-0378">Hydrolase</keyword>
<keyword id="KW-0460">Magnesium</keyword>
<keyword id="KW-0479">Metal-binding</keyword>
<keyword id="KW-0547">Nucleotide-binding</keyword>
<feature type="chain" id="PRO_0000386111" description="GTPase Obg">
    <location>
        <begin position="1"/>
        <end position="430"/>
    </location>
</feature>
<feature type="domain" description="Obg" evidence="3">
    <location>
        <begin position="1"/>
        <end position="158"/>
    </location>
</feature>
<feature type="domain" description="OBG-type G" evidence="1">
    <location>
        <begin position="159"/>
        <end position="334"/>
    </location>
</feature>
<feature type="domain" description="OCT" evidence="2">
    <location>
        <begin position="353"/>
        <end position="430"/>
    </location>
</feature>
<feature type="region of interest" description="Disordered" evidence="4">
    <location>
        <begin position="122"/>
        <end position="143"/>
    </location>
</feature>
<feature type="binding site" evidence="1">
    <location>
        <begin position="165"/>
        <end position="172"/>
    </location>
    <ligand>
        <name>GTP</name>
        <dbReference type="ChEBI" id="CHEBI:37565"/>
    </ligand>
</feature>
<feature type="binding site" evidence="1">
    <location>
        <position position="172"/>
    </location>
    <ligand>
        <name>Mg(2+)</name>
        <dbReference type="ChEBI" id="CHEBI:18420"/>
    </ligand>
</feature>
<feature type="binding site" evidence="1">
    <location>
        <begin position="190"/>
        <end position="194"/>
    </location>
    <ligand>
        <name>GTP</name>
        <dbReference type="ChEBI" id="CHEBI:37565"/>
    </ligand>
</feature>
<feature type="binding site" evidence="1">
    <location>
        <position position="192"/>
    </location>
    <ligand>
        <name>Mg(2+)</name>
        <dbReference type="ChEBI" id="CHEBI:18420"/>
    </ligand>
</feature>
<feature type="binding site" evidence="1">
    <location>
        <begin position="212"/>
        <end position="215"/>
    </location>
    <ligand>
        <name>GTP</name>
        <dbReference type="ChEBI" id="CHEBI:37565"/>
    </ligand>
</feature>
<feature type="binding site" evidence="1">
    <location>
        <begin position="282"/>
        <end position="285"/>
    </location>
    <ligand>
        <name>GTP</name>
        <dbReference type="ChEBI" id="CHEBI:37565"/>
    </ligand>
</feature>
<feature type="binding site" evidence="1">
    <location>
        <begin position="315"/>
        <end position="317"/>
    </location>
    <ligand>
        <name>GTP</name>
        <dbReference type="ChEBI" id="CHEBI:37565"/>
    </ligand>
</feature>
<reference key="1">
    <citation type="journal article" date="2006" name="Proc. Natl. Acad. Sci. U.S.A.">
        <title>Comparative genomics of the lactic acid bacteria.</title>
        <authorList>
            <person name="Makarova K.S."/>
            <person name="Slesarev A."/>
            <person name="Wolf Y.I."/>
            <person name="Sorokin A."/>
            <person name="Mirkin B."/>
            <person name="Koonin E.V."/>
            <person name="Pavlov A."/>
            <person name="Pavlova N."/>
            <person name="Karamychev V."/>
            <person name="Polouchine N."/>
            <person name="Shakhova V."/>
            <person name="Grigoriev I."/>
            <person name="Lou Y."/>
            <person name="Rohksar D."/>
            <person name="Lucas S."/>
            <person name="Huang K."/>
            <person name="Goodstein D.M."/>
            <person name="Hawkins T."/>
            <person name="Plengvidhya V."/>
            <person name="Welker D."/>
            <person name="Hughes J."/>
            <person name="Goh Y."/>
            <person name="Benson A."/>
            <person name="Baldwin K."/>
            <person name="Lee J.-H."/>
            <person name="Diaz-Muniz I."/>
            <person name="Dosti B."/>
            <person name="Smeianov V."/>
            <person name="Wechter W."/>
            <person name="Barabote R."/>
            <person name="Lorca G."/>
            <person name="Altermann E."/>
            <person name="Barrangou R."/>
            <person name="Ganesan B."/>
            <person name="Xie Y."/>
            <person name="Rawsthorne H."/>
            <person name="Tamir D."/>
            <person name="Parker C."/>
            <person name="Breidt F."/>
            <person name="Broadbent J.R."/>
            <person name="Hutkins R."/>
            <person name="O'Sullivan D."/>
            <person name="Steele J."/>
            <person name="Unlu G."/>
            <person name="Saier M.H. Jr."/>
            <person name="Klaenhammer T."/>
            <person name="Richardson P."/>
            <person name="Kozyavkin S."/>
            <person name="Weimer B.C."/>
            <person name="Mills D.A."/>
        </authorList>
    </citation>
    <scope>NUCLEOTIDE SEQUENCE [LARGE SCALE GENOMIC DNA]</scope>
    <source>
        <strain>ATCC 25745 / CCUG 21536 / LMG 10740 / 183-1w</strain>
    </source>
</reference>
<evidence type="ECO:0000255" key="1">
    <source>
        <dbReference type="HAMAP-Rule" id="MF_01454"/>
    </source>
</evidence>
<evidence type="ECO:0000255" key="2">
    <source>
        <dbReference type="PROSITE-ProRule" id="PRU01229"/>
    </source>
</evidence>
<evidence type="ECO:0000255" key="3">
    <source>
        <dbReference type="PROSITE-ProRule" id="PRU01231"/>
    </source>
</evidence>
<evidence type="ECO:0000256" key="4">
    <source>
        <dbReference type="SAM" id="MobiDB-lite"/>
    </source>
</evidence>